<proteinExistence type="inferred from homology"/>
<protein>
    <recommendedName>
        <fullName evidence="1">Leucine--tRNA ligase</fullName>
        <ecNumber evidence="1">6.1.1.4</ecNumber>
    </recommendedName>
    <alternativeName>
        <fullName evidence="1">Leucyl-tRNA synthetase</fullName>
        <shortName evidence="1">LeuRS</shortName>
    </alternativeName>
</protein>
<sequence>MHERYVPADVEAAAQSDWRAADAYRSKEDANRKKFYCVSMLPYPSGKLHMGHVRNYTINDVMYRYLRMNGYNTLMPMGWDAFGMPAENAAMANGVPPAQWTYENIAYMKKQMQSMGLAIDWSREVTTCKPDYYKWNQWLFLKMLEKGVAYKKTGTVNWDPVDQTVLANEQVIDGRGWRSGALVEKREIPMYYMRITQYADELLNDLDGLGWPERVKVMQHNWIGKSFGVNFGFPYELDGEKKLLRVFTTRADTIMGVTFCAIAAEHPLAARLARDKPALQAFIDECKRGGVAEADIATMEKKGVATGFSVSHPLTGEPVEVWIGNYVLMSYGEGAVMGVPAHDERDFAFAKKYGLPIRQVIAVEGETYSTDAWQEWYGDKTRAVCVNSGKYDGLAHDAAVDAIAAELKAGGLGDKQITYRLRDWGISRQRYWGTPIPIIHCPSCGDVPVPEQDLPVVLPEDLVPDGTGNPLAKSDAFLNCTCPKCGAAAKRETDTMDTFVDSAWYFSRYAAPDAQTMVDARTDYWMPMDQYIGGIEHAILHLLYSRFWAKVMRDLGLVAFGEPAKNLLTQGMVLNETFYREDAAGKKTWYNPADVTVSFDDKGRPVGAVLKSDGQPVELGGIEKMSKSKNNGVDPQMLIDHYGADTARLFTMFAAPPEQQLEWSGAGVDGASRFLRRVWAFGFANREALAVRAPFDAAQLAEADKTLRREIHGVLKQADFDYQRLQYNTVVSAAMKMLNAIEGAKGATPAVLRETYGVLLRVLYPVVPHVTFELWKALGYADEFGPLLDAPWPKVDEAALEQAEIELVLQVNGKVRGALKVAKDASREAIEAAAVADEMFAKFAEGRPAKKIIVVPGRLVNVVV</sequence>
<reference key="1">
    <citation type="journal article" date="2010" name="Genome Biol. Evol.">
        <title>Continuing evolution of Burkholderia mallei through genome reduction and large-scale rearrangements.</title>
        <authorList>
            <person name="Losada L."/>
            <person name="Ronning C.M."/>
            <person name="DeShazer D."/>
            <person name="Woods D."/>
            <person name="Fedorova N."/>
            <person name="Kim H.S."/>
            <person name="Shabalina S.A."/>
            <person name="Pearson T.R."/>
            <person name="Brinkac L."/>
            <person name="Tan P."/>
            <person name="Nandi T."/>
            <person name="Crabtree J."/>
            <person name="Badger J."/>
            <person name="Beckstrom-Sternberg S."/>
            <person name="Saqib M."/>
            <person name="Schutzer S.E."/>
            <person name="Keim P."/>
            <person name="Nierman W.C."/>
        </authorList>
    </citation>
    <scope>NUCLEOTIDE SEQUENCE [LARGE SCALE GENOMIC DNA]</scope>
    <source>
        <strain>668</strain>
    </source>
</reference>
<feature type="chain" id="PRO_1000009311" description="Leucine--tRNA ligase">
    <location>
        <begin position="1"/>
        <end position="864"/>
    </location>
</feature>
<feature type="short sequence motif" description="'HIGH' region">
    <location>
        <begin position="42"/>
        <end position="52"/>
    </location>
</feature>
<feature type="short sequence motif" description="'KMSKS' region">
    <location>
        <begin position="624"/>
        <end position="628"/>
    </location>
</feature>
<feature type="binding site" evidence="1">
    <location>
        <position position="627"/>
    </location>
    <ligand>
        <name>ATP</name>
        <dbReference type="ChEBI" id="CHEBI:30616"/>
    </ligand>
</feature>
<gene>
    <name evidence="1" type="primary">leuS</name>
    <name type="ordered locus">BURPS668_3415</name>
</gene>
<keyword id="KW-0030">Aminoacyl-tRNA synthetase</keyword>
<keyword id="KW-0067">ATP-binding</keyword>
<keyword id="KW-0963">Cytoplasm</keyword>
<keyword id="KW-0436">Ligase</keyword>
<keyword id="KW-0547">Nucleotide-binding</keyword>
<keyword id="KW-0648">Protein biosynthesis</keyword>
<evidence type="ECO:0000255" key="1">
    <source>
        <dbReference type="HAMAP-Rule" id="MF_00049"/>
    </source>
</evidence>
<organism>
    <name type="scientific">Burkholderia pseudomallei (strain 668)</name>
    <dbReference type="NCBI Taxonomy" id="320373"/>
    <lineage>
        <taxon>Bacteria</taxon>
        <taxon>Pseudomonadati</taxon>
        <taxon>Pseudomonadota</taxon>
        <taxon>Betaproteobacteria</taxon>
        <taxon>Burkholderiales</taxon>
        <taxon>Burkholderiaceae</taxon>
        <taxon>Burkholderia</taxon>
        <taxon>pseudomallei group</taxon>
    </lineage>
</organism>
<name>SYL_BURP6</name>
<accession>A3NDK5</accession>
<comment type="catalytic activity">
    <reaction evidence="1">
        <text>tRNA(Leu) + L-leucine + ATP = L-leucyl-tRNA(Leu) + AMP + diphosphate</text>
        <dbReference type="Rhea" id="RHEA:11688"/>
        <dbReference type="Rhea" id="RHEA-COMP:9613"/>
        <dbReference type="Rhea" id="RHEA-COMP:9622"/>
        <dbReference type="ChEBI" id="CHEBI:30616"/>
        <dbReference type="ChEBI" id="CHEBI:33019"/>
        <dbReference type="ChEBI" id="CHEBI:57427"/>
        <dbReference type="ChEBI" id="CHEBI:78442"/>
        <dbReference type="ChEBI" id="CHEBI:78494"/>
        <dbReference type="ChEBI" id="CHEBI:456215"/>
        <dbReference type="EC" id="6.1.1.4"/>
    </reaction>
</comment>
<comment type="subcellular location">
    <subcellularLocation>
        <location evidence="1">Cytoplasm</location>
    </subcellularLocation>
</comment>
<comment type="similarity">
    <text evidence="1">Belongs to the class-I aminoacyl-tRNA synthetase family.</text>
</comment>
<dbReference type="EC" id="6.1.1.4" evidence="1"/>
<dbReference type="EMBL" id="CP000570">
    <property type="protein sequence ID" value="ABN83305.1"/>
    <property type="molecule type" value="Genomic_DNA"/>
</dbReference>
<dbReference type="RefSeq" id="WP_004547178.1">
    <property type="nucleotide sequence ID" value="NC_009074.1"/>
</dbReference>
<dbReference type="SMR" id="A3NDK5"/>
<dbReference type="KEGG" id="bpd:BURPS668_3415"/>
<dbReference type="HOGENOM" id="CLU_004427_0_0_4"/>
<dbReference type="GO" id="GO:0005829">
    <property type="term" value="C:cytosol"/>
    <property type="evidence" value="ECO:0007669"/>
    <property type="project" value="TreeGrafter"/>
</dbReference>
<dbReference type="GO" id="GO:0002161">
    <property type="term" value="F:aminoacyl-tRNA deacylase activity"/>
    <property type="evidence" value="ECO:0007669"/>
    <property type="project" value="InterPro"/>
</dbReference>
<dbReference type="GO" id="GO:0005524">
    <property type="term" value="F:ATP binding"/>
    <property type="evidence" value="ECO:0007669"/>
    <property type="project" value="UniProtKB-UniRule"/>
</dbReference>
<dbReference type="GO" id="GO:0004823">
    <property type="term" value="F:leucine-tRNA ligase activity"/>
    <property type="evidence" value="ECO:0007669"/>
    <property type="project" value="UniProtKB-UniRule"/>
</dbReference>
<dbReference type="GO" id="GO:0006429">
    <property type="term" value="P:leucyl-tRNA aminoacylation"/>
    <property type="evidence" value="ECO:0007669"/>
    <property type="project" value="UniProtKB-UniRule"/>
</dbReference>
<dbReference type="CDD" id="cd07958">
    <property type="entry name" value="Anticodon_Ia_Leu_BEm"/>
    <property type="match status" value="1"/>
</dbReference>
<dbReference type="CDD" id="cd00812">
    <property type="entry name" value="LeuRS_core"/>
    <property type="match status" value="1"/>
</dbReference>
<dbReference type="FunFam" id="1.10.730.10:FF:000002">
    <property type="entry name" value="Leucine--tRNA ligase"/>
    <property type="match status" value="1"/>
</dbReference>
<dbReference type="FunFam" id="2.20.28.290:FF:000001">
    <property type="entry name" value="Leucine--tRNA ligase"/>
    <property type="match status" value="1"/>
</dbReference>
<dbReference type="FunFam" id="3.10.20.590:FF:000001">
    <property type="entry name" value="Leucine--tRNA ligase"/>
    <property type="match status" value="1"/>
</dbReference>
<dbReference type="FunFam" id="3.40.50.620:FF:000003">
    <property type="entry name" value="Leucine--tRNA ligase"/>
    <property type="match status" value="1"/>
</dbReference>
<dbReference type="FunFam" id="3.40.50.620:FF:000056">
    <property type="entry name" value="Leucine--tRNA ligase"/>
    <property type="match status" value="1"/>
</dbReference>
<dbReference type="FunFam" id="3.90.740.10:FF:000012">
    <property type="entry name" value="Leucine--tRNA ligase"/>
    <property type="match status" value="1"/>
</dbReference>
<dbReference type="Gene3D" id="2.20.28.290">
    <property type="match status" value="1"/>
</dbReference>
<dbReference type="Gene3D" id="3.10.20.590">
    <property type="match status" value="1"/>
</dbReference>
<dbReference type="Gene3D" id="3.40.50.620">
    <property type="entry name" value="HUPs"/>
    <property type="match status" value="2"/>
</dbReference>
<dbReference type="Gene3D" id="1.10.730.10">
    <property type="entry name" value="Isoleucyl-tRNA Synthetase, Domain 1"/>
    <property type="match status" value="1"/>
</dbReference>
<dbReference type="Gene3D" id="3.90.740.10">
    <property type="entry name" value="Valyl/Leucyl/Isoleucyl-tRNA synthetase, editing domain"/>
    <property type="match status" value="1"/>
</dbReference>
<dbReference type="HAMAP" id="MF_00049_B">
    <property type="entry name" value="Leu_tRNA_synth_B"/>
    <property type="match status" value="1"/>
</dbReference>
<dbReference type="InterPro" id="IPR001412">
    <property type="entry name" value="aa-tRNA-synth_I_CS"/>
</dbReference>
<dbReference type="InterPro" id="IPR002300">
    <property type="entry name" value="aa-tRNA-synth_Ia"/>
</dbReference>
<dbReference type="InterPro" id="IPR002302">
    <property type="entry name" value="Leu-tRNA-ligase"/>
</dbReference>
<dbReference type="InterPro" id="IPR025709">
    <property type="entry name" value="Leu_tRNA-synth_edit"/>
</dbReference>
<dbReference type="InterPro" id="IPR013155">
    <property type="entry name" value="M/V/L/I-tRNA-synth_anticd-bd"/>
</dbReference>
<dbReference type="InterPro" id="IPR015413">
    <property type="entry name" value="Methionyl/Leucyl_tRNA_Synth"/>
</dbReference>
<dbReference type="InterPro" id="IPR014729">
    <property type="entry name" value="Rossmann-like_a/b/a_fold"/>
</dbReference>
<dbReference type="InterPro" id="IPR009080">
    <property type="entry name" value="tRNAsynth_Ia_anticodon-bd"/>
</dbReference>
<dbReference type="InterPro" id="IPR009008">
    <property type="entry name" value="Val/Leu/Ile-tRNA-synth_edit"/>
</dbReference>
<dbReference type="NCBIfam" id="TIGR00396">
    <property type="entry name" value="leuS_bact"/>
    <property type="match status" value="1"/>
</dbReference>
<dbReference type="PANTHER" id="PTHR43740:SF2">
    <property type="entry name" value="LEUCINE--TRNA LIGASE, MITOCHONDRIAL"/>
    <property type="match status" value="1"/>
</dbReference>
<dbReference type="PANTHER" id="PTHR43740">
    <property type="entry name" value="LEUCYL-TRNA SYNTHETASE"/>
    <property type="match status" value="1"/>
</dbReference>
<dbReference type="Pfam" id="PF08264">
    <property type="entry name" value="Anticodon_1"/>
    <property type="match status" value="1"/>
</dbReference>
<dbReference type="Pfam" id="PF00133">
    <property type="entry name" value="tRNA-synt_1"/>
    <property type="match status" value="2"/>
</dbReference>
<dbReference type="Pfam" id="PF13603">
    <property type="entry name" value="tRNA-synt_1_2"/>
    <property type="match status" value="1"/>
</dbReference>
<dbReference type="Pfam" id="PF09334">
    <property type="entry name" value="tRNA-synt_1g"/>
    <property type="match status" value="1"/>
</dbReference>
<dbReference type="PRINTS" id="PR00985">
    <property type="entry name" value="TRNASYNTHLEU"/>
</dbReference>
<dbReference type="SUPFAM" id="SSF47323">
    <property type="entry name" value="Anticodon-binding domain of a subclass of class I aminoacyl-tRNA synthetases"/>
    <property type="match status" value="1"/>
</dbReference>
<dbReference type="SUPFAM" id="SSF52374">
    <property type="entry name" value="Nucleotidylyl transferase"/>
    <property type="match status" value="1"/>
</dbReference>
<dbReference type="SUPFAM" id="SSF50677">
    <property type="entry name" value="ValRS/IleRS/LeuRS editing domain"/>
    <property type="match status" value="1"/>
</dbReference>
<dbReference type="PROSITE" id="PS00178">
    <property type="entry name" value="AA_TRNA_LIGASE_I"/>
    <property type="match status" value="1"/>
</dbReference>